<accession>P53243</accession>
<accession>D6VUK1</accession>
<proteinExistence type="predicted"/>
<protein>
    <recommendedName>
        <fullName>Zinc finger protein YGR067C</fullName>
    </recommendedName>
</protein>
<sequence>MAAGQKKYICSFCLKPFSRSEHKIRHERSHAGVKPFQCQVCKHSFVRRDLLQRHIRTVHRTFLLSSYASMTGDKADIPVSLGVGDVDSTSPRDIKMETLVNSMIKVNSGLINIHYHSSNVEKMDKQQRCVIGKESSSLKKGKSRFKQVKSRLESSISVKILQEYSLDFISSRDILTFFRMGVSHLVENKIFQNFFPDLFSSLQNDELVESFWINKPFGLIIACLGMSISLNQDSQKLWFICCTNLYASSSKHDNDFDTEDILSQTEQHDVFALILFYSLLVMLENNIPVSNSIKKFDVFSMLQDILKPFTVASSSYHYLNSKENAWFIFDLWVNILRDSNNFNNDSLLIFGWFVNQEFISSNPLKDFIYKGPSMSTTDLTLKHINILADSAYVYFIIKKTYPQELPSDFRVHDLLVYLNECFVMQQPIKPETSANPSLFANVMNARITDCKSKSNWLLWETIWFEFINNLTLRNGTTRNIWFIDNFPQVSTSCLLHHSSSFVDETLITTNLSIISMLLNLKSFTLASLNPRNIQLITDIVSFQLKLFSSELIASSDVSPSQVSQLLVNPNVHLMLYFWFDTIYVQRQSYLSSTEKEEFEKVEVFVNDYIITHQKNLVTDLHSILFDFWSDSFIAYHILLHAIVSSLRDNILYPYLIYSPHLNDQTKALLTDISNWSCFALQQPFRKTSRGSLSGASDMKSFSVASCLPLSPNFLKRDSNCNKILLPPLDIKAIEPISTSNYTYVNSAPKQQEKEQPLLRATGNNINLVQTIVVPPQVNMESQEFSASSTDNKQSKNIEIFSQIK</sequence>
<evidence type="ECO:0000255" key="1">
    <source>
        <dbReference type="PROSITE-ProRule" id="PRU00042"/>
    </source>
</evidence>
<evidence type="ECO:0000256" key="2">
    <source>
        <dbReference type="SAM" id="MobiDB-lite"/>
    </source>
</evidence>
<evidence type="ECO:0000305" key="3"/>
<name>YG2A_YEAST</name>
<feature type="chain" id="PRO_0000046863" description="Zinc finger protein YGR067C">
    <location>
        <begin position="1"/>
        <end position="804"/>
    </location>
</feature>
<feature type="zinc finger region" description="C2H2-type 1" evidence="1">
    <location>
        <begin position="8"/>
        <end position="30"/>
    </location>
</feature>
<feature type="zinc finger region" description="C2H2-type 2" evidence="1">
    <location>
        <begin position="36"/>
        <end position="59"/>
    </location>
</feature>
<feature type="region of interest" description="Disordered" evidence="2">
    <location>
        <begin position="782"/>
        <end position="804"/>
    </location>
</feature>
<feature type="compositionally biased region" description="Polar residues" evidence="2">
    <location>
        <begin position="782"/>
        <end position="796"/>
    </location>
</feature>
<organism>
    <name type="scientific">Saccharomyces cerevisiae (strain ATCC 204508 / S288c)</name>
    <name type="common">Baker's yeast</name>
    <dbReference type="NCBI Taxonomy" id="559292"/>
    <lineage>
        <taxon>Eukaryota</taxon>
        <taxon>Fungi</taxon>
        <taxon>Dikarya</taxon>
        <taxon>Ascomycota</taxon>
        <taxon>Saccharomycotina</taxon>
        <taxon>Saccharomycetes</taxon>
        <taxon>Saccharomycetales</taxon>
        <taxon>Saccharomycetaceae</taxon>
        <taxon>Saccharomyces</taxon>
    </lineage>
</organism>
<gene>
    <name type="ordered locus">YGR067C</name>
</gene>
<keyword id="KW-0238">DNA-binding</keyword>
<keyword id="KW-0479">Metal-binding</keyword>
<keyword id="KW-0539">Nucleus</keyword>
<keyword id="KW-1185">Reference proteome</keyword>
<keyword id="KW-0677">Repeat</keyword>
<keyword id="KW-0862">Zinc</keyword>
<keyword id="KW-0863">Zinc-finger</keyword>
<dbReference type="EMBL" id="Z72852">
    <property type="protein sequence ID" value="CAA97069.1"/>
    <property type="molecule type" value="Genomic_DNA"/>
</dbReference>
<dbReference type="EMBL" id="BK006941">
    <property type="protein sequence ID" value="DAA08162.2"/>
    <property type="molecule type" value="Genomic_DNA"/>
</dbReference>
<dbReference type="PIR" id="S64362">
    <property type="entry name" value="S64362"/>
</dbReference>
<dbReference type="RefSeq" id="NP_011581.4">
    <property type="nucleotide sequence ID" value="NM_001181196.4"/>
</dbReference>
<dbReference type="SMR" id="P53243"/>
<dbReference type="BioGRID" id="33311">
    <property type="interactions" value="46"/>
</dbReference>
<dbReference type="DIP" id="DIP-2819N"/>
<dbReference type="FunCoup" id="P53243">
    <property type="interactions" value="382"/>
</dbReference>
<dbReference type="IntAct" id="P53243">
    <property type="interactions" value="12"/>
</dbReference>
<dbReference type="MINT" id="P53243"/>
<dbReference type="STRING" id="4932.YGR067C"/>
<dbReference type="iPTMnet" id="P53243"/>
<dbReference type="PaxDb" id="4932-YGR067C"/>
<dbReference type="PeptideAtlas" id="P53243"/>
<dbReference type="EnsemblFungi" id="YGR067C_mRNA">
    <property type="protein sequence ID" value="YGR067C"/>
    <property type="gene ID" value="YGR067C"/>
</dbReference>
<dbReference type="GeneID" id="852958"/>
<dbReference type="KEGG" id="sce:YGR067C"/>
<dbReference type="AGR" id="SGD:S000003299"/>
<dbReference type="SGD" id="S000003299">
    <property type="gene designation" value="YGR067C"/>
</dbReference>
<dbReference type="VEuPathDB" id="FungiDB:YGR067C"/>
<dbReference type="eggNOG" id="KOG1721">
    <property type="taxonomic scope" value="Eukaryota"/>
</dbReference>
<dbReference type="HOGENOM" id="CLU_350296_0_0_1"/>
<dbReference type="InParanoid" id="P53243"/>
<dbReference type="OMA" id="LLWETIW"/>
<dbReference type="OrthoDB" id="654211at2759"/>
<dbReference type="BioCyc" id="YEAST:G3O-30781-MONOMER"/>
<dbReference type="BioGRID-ORCS" id="852958">
    <property type="hits" value="0 hits in 13 CRISPR screens"/>
</dbReference>
<dbReference type="PRO" id="PR:P53243"/>
<dbReference type="Proteomes" id="UP000002311">
    <property type="component" value="Chromosome VII"/>
</dbReference>
<dbReference type="RNAct" id="P53243">
    <property type="molecule type" value="protein"/>
</dbReference>
<dbReference type="GO" id="GO:0000785">
    <property type="term" value="C:chromatin"/>
    <property type="evidence" value="ECO:0000318"/>
    <property type="project" value="GO_Central"/>
</dbReference>
<dbReference type="GO" id="GO:0005634">
    <property type="term" value="C:nucleus"/>
    <property type="evidence" value="ECO:0007669"/>
    <property type="project" value="UniProtKB-SubCell"/>
</dbReference>
<dbReference type="GO" id="GO:0000981">
    <property type="term" value="F:DNA-binding transcription factor activity, RNA polymerase II-specific"/>
    <property type="evidence" value="ECO:0000318"/>
    <property type="project" value="GO_Central"/>
</dbReference>
<dbReference type="GO" id="GO:0000978">
    <property type="term" value="F:RNA polymerase II cis-regulatory region sequence-specific DNA binding"/>
    <property type="evidence" value="ECO:0000318"/>
    <property type="project" value="GO_Central"/>
</dbReference>
<dbReference type="GO" id="GO:0043565">
    <property type="term" value="F:sequence-specific DNA binding"/>
    <property type="evidence" value="ECO:0007005"/>
    <property type="project" value="SGD"/>
</dbReference>
<dbReference type="GO" id="GO:0008270">
    <property type="term" value="F:zinc ion binding"/>
    <property type="evidence" value="ECO:0007669"/>
    <property type="project" value="UniProtKB-KW"/>
</dbReference>
<dbReference type="GO" id="GO:0006357">
    <property type="term" value="P:regulation of transcription by RNA polymerase II"/>
    <property type="evidence" value="ECO:0000318"/>
    <property type="project" value="GO_Central"/>
</dbReference>
<dbReference type="FunFam" id="3.30.160.60:FF:000446">
    <property type="entry name" value="Zinc finger protein"/>
    <property type="match status" value="1"/>
</dbReference>
<dbReference type="FunFam" id="3.30.160.60:FF:002925">
    <property type="entry name" value="Zinc finger protein YGR067C"/>
    <property type="match status" value="1"/>
</dbReference>
<dbReference type="Gene3D" id="3.30.160.60">
    <property type="entry name" value="Classic Zinc Finger"/>
    <property type="match status" value="2"/>
</dbReference>
<dbReference type="InterPro" id="IPR051059">
    <property type="entry name" value="VerF-like"/>
</dbReference>
<dbReference type="InterPro" id="IPR036236">
    <property type="entry name" value="Znf_C2H2_sf"/>
</dbReference>
<dbReference type="InterPro" id="IPR013087">
    <property type="entry name" value="Znf_C2H2_type"/>
</dbReference>
<dbReference type="PANTHER" id="PTHR40626">
    <property type="entry name" value="MIP31509P"/>
    <property type="match status" value="1"/>
</dbReference>
<dbReference type="PANTHER" id="PTHR40626:SF34">
    <property type="entry name" value="ZINC FINGER PROTEIN YGR067C"/>
    <property type="match status" value="1"/>
</dbReference>
<dbReference type="Pfam" id="PF00096">
    <property type="entry name" value="zf-C2H2"/>
    <property type="match status" value="1"/>
</dbReference>
<dbReference type="SMART" id="SM00355">
    <property type="entry name" value="ZnF_C2H2"/>
    <property type="match status" value="2"/>
</dbReference>
<dbReference type="SUPFAM" id="SSF57667">
    <property type="entry name" value="beta-beta-alpha zinc fingers"/>
    <property type="match status" value="1"/>
</dbReference>
<dbReference type="PROSITE" id="PS00028">
    <property type="entry name" value="ZINC_FINGER_C2H2_1"/>
    <property type="match status" value="2"/>
</dbReference>
<dbReference type="PROSITE" id="PS50157">
    <property type="entry name" value="ZINC_FINGER_C2H2_2"/>
    <property type="match status" value="2"/>
</dbReference>
<reference key="1">
    <citation type="journal article" date="1997" name="Nature">
        <title>The nucleotide sequence of Saccharomyces cerevisiae chromosome VII.</title>
        <authorList>
            <person name="Tettelin H."/>
            <person name="Agostoni-Carbone M.L."/>
            <person name="Albermann K."/>
            <person name="Albers M."/>
            <person name="Arroyo J."/>
            <person name="Backes U."/>
            <person name="Barreiros T."/>
            <person name="Bertani I."/>
            <person name="Bjourson A.J."/>
            <person name="Brueckner M."/>
            <person name="Bruschi C.V."/>
            <person name="Carignani G."/>
            <person name="Castagnoli L."/>
            <person name="Cerdan E."/>
            <person name="Clemente M.L."/>
            <person name="Coblenz A."/>
            <person name="Coglievina M."/>
            <person name="Coissac E."/>
            <person name="Defoor E."/>
            <person name="Del Bino S."/>
            <person name="Delius H."/>
            <person name="Delneri D."/>
            <person name="de Wergifosse P."/>
            <person name="Dujon B."/>
            <person name="Durand P."/>
            <person name="Entian K.-D."/>
            <person name="Eraso P."/>
            <person name="Escribano V."/>
            <person name="Fabiani L."/>
            <person name="Fartmann B."/>
            <person name="Feroli F."/>
            <person name="Feuermann M."/>
            <person name="Frontali L."/>
            <person name="Garcia-Gonzalez M."/>
            <person name="Garcia-Saez M.I."/>
            <person name="Goffeau A."/>
            <person name="Guerreiro P."/>
            <person name="Hani J."/>
            <person name="Hansen M."/>
            <person name="Hebling U."/>
            <person name="Hernandez K."/>
            <person name="Heumann K."/>
            <person name="Hilger F."/>
            <person name="Hofmann B."/>
            <person name="Indge K.J."/>
            <person name="James C.M."/>
            <person name="Klima R."/>
            <person name="Koetter P."/>
            <person name="Kramer B."/>
            <person name="Kramer W."/>
            <person name="Lauquin G."/>
            <person name="Leuther H."/>
            <person name="Louis E.J."/>
            <person name="Maillier E."/>
            <person name="Marconi A."/>
            <person name="Martegani E."/>
            <person name="Mazon M.J."/>
            <person name="Mazzoni C."/>
            <person name="McReynolds A.D.K."/>
            <person name="Melchioretto P."/>
            <person name="Mewes H.-W."/>
            <person name="Minenkova O."/>
            <person name="Mueller-Auer S."/>
            <person name="Nawrocki A."/>
            <person name="Netter P."/>
            <person name="Neu R."/>
            <person name="Nombela C."/>
            <person name="Oliver S.G."/>
            <person name="Panzeri L."/>
            <person name="Paoluzi S."/>
            <person name="Plevani P."/>
            <person name="Portetelle D."/>
            <person name="Portillo F."/>
            <person name="Potier S."/>
            <person name="Purnelle B."/>
            <person name="Rieger M."/>
            <person name="Riles L."/>
            <person name="Rinaldi T."/>
            <person name="Robben J."/>
            <person name="Rodrigues-Pousada C."/>
            <person name="Rodriguez-Belmonte E."/>
            <person name="Rodriguez-Torres A.M."/>
            <person name="Rose M."/>
            <person name="Ruzzi M."/>
            <person name="Saliola M."/>
            <person name="Sanchez-Perez M."/>
            <person name="Schaefer B."/>
            <person name="Schaefer M."/>
            <person name="Scharfe M."/>
            <person name="Schmidheini T."/>
            <person name="Schreer A."/>
            <person name="Skala J."/>
            <person name="Souciet J.-L."/>
            <person name="Steensma H.Y."/>
            <person name="Talla E."/>
            <person name="Thierry A."/>
            <person name="Vandenbol M."/>
            <person name="van der Aart Q.J.M."/>
            <person name="Van Dyck L."/>
            <person name="Vanoni M."/>
            <person name="Verhasselt P."/>
            <person name="Voet M."/>
            <person name="Volckaert G."/>
            <person name="Wambutt R."/>
            <person name="Watson M.D."/>
            <person name="Weber N."/>
            <person name="Wedler E."/>
            <person name="Wedler H."/>
            <person name="Wipfli P."/>
            <person name="Wolf K."/>
            <person name="Wright L.F."/>
            <person name="Zaccaria P."/>
            <person name="Zimmermann M."/>
            <person name="Zollner A."/>
            <person name="Kleine K."/>
        </authorList>
    </citation>
    <scope>NUCLEOTIDE SEQUENCE [LARGE SCALE GENOMIC DNA]</scope>
    <source>
        <strain>ATCC 204508 / S288c</strain>
    </source>
</reference>
<reference key="2">
    <citation type="journal article" date="2014" name="G3 (Bethesda)">
        <title>The reference genome sequence of Saccharomyces cerevisiae: Then and now.</title>
        <authorList>
            <person name="Engel S.R."/>
            <person name="Dietrich F.S."/>
            <person name="Fisk D.G."/>
            <person name="Binkley G."/>
            <person name="Balakrishnan R."/>
            <person name="Costanzo M.C."/>
            <person name="Dwight S.S."/>
            <person name="Hitz B.C."/>
            <person name="Karra K."/>
            <person name="Nash R.S."/>
            <person name="Weng S."/>
            <person name="Wong E.D."/>
            <person name="Lloyd P."/>
            <person name="Skrzypek M.S."/>
            <person name="Miyasato S.R."/>
            <person name="Simison M."/>
            <person name="Cherry J.M."/>
        </authorList>
    </citation>
    <scope>GENOME REANNOTATION</scope>
    <scope>SEQUENCE REVISION TO 795</scope>
    <source>
        <strain>ATCC 204508 / S288c</strain>
    </source>
</reference>
<comment type="subcellular location">
    <subcellularLocation>
        <location evidence="3">Nucleus</location>
    </subcellularLocation>
</comment>